<proteinExistence type="evidence at protein level"/>
<accession>Q60670</accession>
<accession>Q3UR46</accession>
<protein>
    <recommendedName>
        <fullName>Serine/threonine-protein kinase SIK1</fullName>
        <ecNumber evidence="9 11 13 14">2.7.11.1</ecNumber>
    </recommendedName>
    <alternativeName>
        <fullName>HRT-20</fullName>
    </alternativeName>
    <alternativeName>
        <fullName>Myocardial SNF1-like kinase</fullName>
    </alternativeName>
    <alternativeName>
        <fullName>Salt-inducible kinase 1</fullName>
        <shortName>SIK-1</shortName>
    </alternativeName>
    <alternativeName>
        <fullName>Serine/threonine-protein kinase SNF1-like kinase 1</fullName>
        <shortName>Serine/threonine-protein kinase SNF1LK</shortName>
    </alternativeName>
</protein>
<evidence type="ECO:0000250" key="1"/>
<evidence type="ECO:0000250" key="2">
    <source>
        <dbReference type="UniProtKB" id="P57059"/>
    </source>
</evidence>
<evidence type="ECO:0000250" key="3">
    <source>
        <dbReference type="UniProtKB" id="Q9R1U5"/>
    </source>
</evidence>
<evidence type="ECO:0000255" key="4">
    <source>
        <dbReference type="PROSITE-ProRule" id="PRU00159"/>
    </source>
</evidence>
<evidence type="ECO:0000255" key="5">
    <source>
        <dbReference type="PROSITE-ProRule" id="PRU00212"/>
    </source>
</evidence>
<evidence type="ECO:0000255" key="6">
    <source>
        <dbReference type="PROSITE-ProRule" id="PRU10027"/>
    </source>
</evidence>
<evidence type="ECO:0000256" key="7">
    <source>
        <dbReference type="SAM" id="MobiDB-lite"/>
    </source>
</evidence>
<evidence type="ECO:0000269" key="8">
    <source>
    </source>
</evidence>
<evidence type="ECO:0000269" key="9">
    <source>
    </source>
</evidence>
<evidence type="ECO:0000269" key="10">
    <source>
    </source>
</evidence>
<evidence type="ECO:0000269" key="11">
    <source>
    </source>
</evidence>
<evidence type="ECO:0000269" key="12">
    <source>
    </source>
</evidence>
<evidence type="ECO:0000269" key="13">
    <source>
    </source>
</evidence>
<evidence type="ECO:0000269" key="14">
    <source>
    </source>
</evidence>
<evidence type="ECO:0000269" key="15">
    <source>
    </source>
</evidence>
<evidence type="ECO:0000269" key="16">
    <source>
    </source>
</evidence>
<evidence type="ECO:0000269" key="17">
    <source>
    </source>
</evidence>
<evidence type="ECO:0000269" key="18">
    <source>
    </source>
</evidence>
<evidence type="ECO:0000305" key="19"/>
<comment type="function">
    <text evidence="8 9 10 11 12 13 14 15 16 17">Serine/threonine-protein kinase involved in various processes such as cell cycle regulation, gluconeogenesis and lipogenesis regulation, muscle growth and differentiation and tumor suppression. Phosphorylates HDAC4, HDAC5, PPME1, SREBF1, CRTC1/TORC1 and CRTC2/TORC2. Acts as a tumor suppressor and plays a key role in p53/TP53-dependent anoikis, a type of apoptosis triggered by cell detachment: required for phosphorylation of p53/TP53 in response to loss of adhesion and is able to suppress metastasis. Part of a sodium-sensing signaling network, probably by mediating phosphorylation of PPME1: following increases in intracellular sodium, SIK1 is activated by CaMK1 and phosphorylates PPME1 subunit of protein phosphatase 2A (PP2A), leading to dephosphorylation of sodium/potassium-transporting ATPase ATP1A1 and subsequent increase activity of ATP1A1. Acts as a regulator of muscle cells by phosphorylating and inhibiting class II histone deacetylases HDAC4 and HDAC5, leading to promote expression of MEF2 target genes in myocytes. Also required during cardiomyogenesis by regulating the exit of cardiomyoblasts from the cell cycle via down-regulation of CDKN1C/p57Kip2. Acts as a regulator of hepatic gluconeogenesis by phosphorylating and repressing the CREB-specific coactivators CRTC1/TORC1 and CRTC2/TORC2, leading to inhibit CREB activity. Also regulates hepatic lipogenesis by phosphorylating and inhibiting SREBF1. In concert with CRTC1/TORC1, regulates the light-induced entrainment of the circadian clock by attenuating PER1 induction; represses CREB-mediated transcription of PER1 by phosphorylating and deactivating CRTC1/TORC1.</text>
</comment>
<comment type="catalytic activity">
    <reaction evidence="9 11 13 14">
        <text>L-seryl-[protein] + ATP = O-phospho-L-seryl-[protein] + ADP + H(+)</text>
        <dbReference type="Rhea" id="RHEA:17989"/>
        <dbReference type="Rhea" id="RHEA-COMP:9863"/>
        <dbReference type="Rhea" id="RHEA-COMP:11604"/>
        <dbReference type="ChEBI" id="CHEBI:15378"/>
        <dbReference type="ChEBI" id="CHEBI:29999"/>
        <dbReference type="ChEBI" id="CHEBI:30616"/>
        <dbReference type="ChEBI" id="CHEBI:83421"/>
        <dbReference type="ChEBI" id="CHEBI:456216"/>
        <dbReference type="EC" id="2.7.11.1"/>
    </reaction>
</comment>
<comment type="catalytic activity">
    <reaction evidence="9 11 13 14">
        <text>L-threonyl-[protein] + ATP = O-phospho-L-threonyl-[protein] + ADP + H(+)</text>
        <dbReference type="Rhea" id="RHEA:46608"/>
        <dbReference type="Rhea" id="RHEA-COMP:11060"/>
        <dbReference type="Rhea" id="RHEA-COMP:11605"/>
        <dbReference type="ChEBI" id="CHEBI:15378"/>
        <dbReference type="ChEBI" id="CHEBI:30013"/>
        <dbReference type="ChEBI" id="CHEBI:30616"/>
        <dbReference type="ChEBI" id="CHEBI:61977"/>
        <dbReference type="ChEBI" id="CHEBI:456216"/>
        <dbReference type="EC" id="2.7.11.1"/>
    </reaction>
</comment>
<comment type="cofactor">
    <cofactor evidence="1">
        <name>Mg(2+)</name>
        <dbReference type="ChEBI" id="CHEBI:18420"/>
    </cofactor>
</comment>
<comment type="activity regulation">
    <text evidence="12">Activated by phosphorylation on Thr-182. Also activated by phosphorylation on Thr-322 in response to increases in intracellular sodium in parallel with elevations in intracellular calcium through the reversible sodium/calcium exchanger.</text>
</comment>
<comment type="subunit">
    <text evidence="1">Interacts (when phosphorylated on Thr-182 and Ser-186) with YWHAZ. Interacts with ATP1A1 (By similarity).</text>
</comment>
<comment type="subcellular location">
    <subcellularLocation>
        <location>Cytoplasm</location>
    </subcellularLocation>
    <subcellularLocation>
        <location>Nucleus</location>
    </subcellularLocation>
    <text>Following ACTH (adrenocorticotropic hormone) treatment and subsequent phosphorylation by PKA, translocates to the cytoplasm, where it binds to YWHAZ.</text>
</comment>
<comment type="tissue specificity">
    <text evidence="9 18">Expressed in lung, skin, ovary, heart and stomach. No expression in brain, liver or adult skeletal muscle but is present in skeletal muscle progenitor cells of the somite beginning at 9.5 dpc. Present at 8.0 dpc in the monolayer of presumptive myocardial cells but rapidly down-regulated at 8.5 dpc upon primitive ventricle formation, although still present in myocardial cells that will populate the primitive atrium and bulbus cordis. At 9.5 dpc expression is down-regulated in the primitive atrium but observed in the sinus venosus and truncus arteriosus.</text>
</comment>
<comment type="induction">
    <text evidence="13">Expression is stimulated by CREB1 in myocytes; direct target of CREB1.</text>
</comment>
<comment type="domain">
    <text evidence="10">The RK-rich region determines the subcellular location.</text>
</comment>
<comment type="PTM">
    <text evidence="8 12 13">Phosphorylated at Thr-182 by STK11/LKB1 in complex with STE20-related adapter-alpha (STRADA) pseudo kinase and CAB39, leading to its activation. Phosphorylation at Thr-182 promotes autophosphorylation at Ser-186, which is required for sustained activity. Autophosphorylation at Ser-186 is maintained by sequential phosphorylation at Thr-182 by GSK3-beta. GSK3-beta cannot initiate phosphorylation at Thr-182, it can only maintain it. Phosphorylation at Ser-577 by PKA promotes translocation to the cytoplasm. Phosphorylation at Thr-322 by CaMK1 following intracellular sodium concentration leads to activation.</text>
</comment>
<comment type="similarity">
    <text evidence="19">Belongs to the protein kinase superfamily. CAMK Ser/Thr protein kinase family. AMPK subfamily.</text>
</comment>
<name>SIK1_MOUSE</name>
<dbReference type="EC" id="2.7.11.1" evidence="9 11 13 14"/>
<dbReference type="EMBL" id="U11494">
    <property type="protein sequence ID" value="AAA67926.2"/>
    <property type="molecule type" value="mRNA"/>
</dbReference>
<dbReference type="EMBL" id="AK141817">
    <property type="protein sequence ID" value="BAE24842.1"/>
    <property type="molecule type" value="mRNA"/>
</dbReference>
<dbReference type="CCDS" id="CCDS37552.1"/>
<dbReference type="PIR" id="I49072">
    <property type="entry name" value="I49072"/>
</dbReference>
<dbReference type="RefSeq" id="NP_034961.2">
    <property type="nucleotide sequence ID" value="NM_010831.3"/>
</dbReference>
<dbReference type="SMR" id="Q60670"/>
<dbReference type="BioGRID" id="201531">
    <property type="interactions" value="3"/>
</dbReference>
<dbReference type="FunCoup" id="Q60670">
    <property type="interactions" value="1841"/>
</dbReference>
<dbReference type="IntAct" id="Q60670">
    <property type="interactions" value="1"/>
</dbReference>
<dbReference type="STRING" id="10090.ENSMUSP00000024839"/>
<dbReference type="ChEMBL" id="CHEMBL5169157"/>
<dbReference type="GlyGen" id="Q60670">
    <property type="glycosylation" value="2 sites"/>
</dbReference>
<dbReference type="iPTMnet" id="Q60670"/>
<dbReference type="PhosphoSitePlus" id="Q60670"/>
<dbReference type="PaxDb" id="10090-ENSMUSP00000024839"/>
<dbReference type="ProteomicsDB" id="261041"/>
<dbReference type="Pumba" id="Q60670"/>
<dbReference type="DNASU" id="17691"/>
<dbReference type="Ensembl" id="ENSMUST00000024839.6">
    <property type="protein sequence ID" value="ENSMUSP00000024839.5"/>
    <property type="gene ID" value="ENSMUSG00000024042.8"/>
</dbReference>
<dbReference type="GeneID" id="17691"/>
<dbReference type="KEGG" id="mmu:17691"/>
<dbReference type="UCSC" id="uc008bvr.1">
    <property type="organism name" value="mouse"/>
</dbReference>
<dbReference type="AGR" id="MGI:104754"/>
<dbReference type="CTD" id="150094"/>
<dbReference type="MGI" id="MGI:104754">
    <property type="gene designation" value="Sik1"/>
</dbReference>
<dbReference type="VEuPathDB" id="HostDB:ENSMUSG00000024042"/>
<dbReference type="eggNOG" id="KOG0586">
    <property type="taxonomic scope" value="Eukaryota"/>
</dbReference>
<dbReference type="GeneTree" id="ENSGT00940000154989"/>
<dbReference type="HOGENOM" id="CLU_000288_87_2_1"/>
<dbReference type="InParanoid" id="Q60670"/>
<dbReference type="OMA" id="IAQIWQH"/>
<dbReference type="OrthoDB" id="193931at2759"/>
<dbReference type="PhylomeDB" id="Q60670"/>
<dbReference type="TreeFam" id="TF315213"/>
<dbReference type="BioGRID-ORCS" id="17691">
    <property type="hits" value="2 hits in 64 CRISPR screens"/>
</dbReference>
<dbReference type="ChiTaRS" id="Nop58">
    <property type="organism name" value="mouse"/>
</dbReference>
<dbReference type="PRO" id="PR:Q60670"/>
<dbReference type="Proteomes" id="UP000000589">
    <property type="component" value="Chromosome 17"/>
</dbReference>
<dbReference type="RNAct" id="Q60670">
    <property type="molecule type" value="protein"/>
</dbReference>
<dbReference type="Bgee" id="ENSMUSG00000024042">
    <property type="expression patterns" value="Expressed in granulocyte and 212 other cell types or tissues"/>
</dbReference>
<dbReference type="GO" id="GO:0005737">
    <property type="term" value="C:cytoplasm"/>
    <property type="evidence" value="ECO:0000314"/>
    <property type="project" value="UniProtKB"/>
</dbReference>
<dbReference type="GO" id="GO:0005634">
    <property type="term" value="C:nucleus"/>
    <property type="evidence" value="ECO:0000314"/>
    <property type="project" value="UniProtKB"/>
</dbReference>
<dbReference type="GO" id="GO:0071889">
    <property type="term" value="F:14-3-3 protein binding"/>
    <property type="evidence" value="ECO:0000250"/>
    <property type="project" value="UniProtKB"/>
</dbReference>
<dbReference type="GO" id="GO:0005524">
    <property type="term" value="F:ATP binding"/>
    <property type="evidence" value="ECO:0000314"/>
    <property type="project" value="UniProtKB"/>
</dbReference>
<dbReference type="GO" id="GO:0008140">
    <property type="term" value="F:cAMP response element binding protein binding"/>
    <property type="evidence" value="ECO:0000314"/>
    <property type="project" value="UniProtKB"/>
</dbReference>
<dbReference type="GO" id="GO:0042826">
    <property type="term" value="F:histone deacetylase binding"/>
    <property type="evidence" value="ECO:0000353"/>
    <property type="project" value="UniProtKB"/>
</dbReference>
<dbReference type="GO" id="GO:0000287">
    <property type="term" value="F:magnesium ion binding"/>
    <property type="evidence" value="ECO:0000314"/>
    <property type="project" value="UniProtKB"/>
</dbReference>
<dbReference type="GO" id="GO:0019901">
    <property type="term" value="F:protein kinase binding"/>
    <property type="evidence" value="ECO:0000353"/>
    <property type="project" value="UniProtKB"/>
</dbReference>
<dbReference type="GO" id="GO:0106310">
    <property type="term" value="F:protein serine kinase activity"/>
    <property type="evidence" value="ECO:0007669"/>
    <property type="project" value="RHEA"/>
</dbReference>
<dbReference type="GO" id="GO:0004674">
    <property type="term" value="F:protein serine/threonine kinase activity"/>
    <property type="evidence" value="ECO:0000314"/>
    <property type="project" value="UniProtKB"/>
</dbReference>
<dbReference type="GO" id="GO:0043276">
    <property type="term" value="P:anoikis"/>
    <property type="evidence" value="ECO:0000315"/>
    <property type="project" value="BHF-UCL"/>
</dbReference>
<dbReference type="GO" id="GO:0055007">
    <property type="term" value="P:cardiac muscle cell differentiation"/>
    <property type="evidence" value="ECO:0000315"/>
    <property type="project" value="UniProtKB"/>
</dbReference>
<dbReference type="GO" id="GO:0043153">
    <property type="term" value="P:entrainment of circadian clock by photoperiod"/>
    <property type="evidence" value="ECO:0000315"/>
    <property type="project" value="UniProtKB"/>
</dbReference>
<dbReference type="GO" id="GO:0035556">
    <property type="term" value="P:intracellular signal transduction"/>
    <property type="evidence" value="ECO:0000314"/>
    <property type="project" value="UniProtKB"/>
</dbReference>
<dbReference type="GO" id="GO:0032792">
    <property type="term" value="P:negative regulation of CREB transcription factor activity"/>
    <property type="evidence" value="ECO:0000314"/>
    <property type="project" value="UniProtKB"/>
</dbReference>
<dbReference type="GO" id="GO:0045721">
    <property type="term" value="P:negative regulation of gluconeogenesis"/>
    <property type="evidence" value="ECO:0000314"/>
    <property type="project" value="UniProtKB"/>
</dbReference>
<dbReference type="GO" id="GO:0000122">
    <property type="term" value="P:negative regulation of transcription by RNA polymerase II"/>
    <property type="evidence" value="ECO:0007669"/>
    <property type="project" value="Ensembl"/>
</dbReference>
<dbReference type="GO" id="GO:0010868">
    <property type="term" value="P:negative regulation of triglyceride biosynthetic process"/>
    <property type="evidence" value="ECO:0000314"/>
    <property type="project" value="UniProtKB"/>
</dbReference>
<dbReference type="GO" id="GO:2000210">
    <property type="term" value="P:positive regulation of anoikis"/>
    <property type="evidence" value="ECO:0007669"/>
    <property type="project" value="Ensembl"/>
</dbReference>
<dbReference type="GO" id="GO:0046777">
    <property type="term" value="P:protein autophosphorylation"/>
    <property type="evidence" value="ECO:0000250"/>
    <property type="project" value="UniProtKB"/>
</dbReference>
<dbReference type="GO" id="GO:0006468">
    <property type="term" value="P:protein phosphorylation"/>
    <property type="evidence" value="ECO:0000314"/>
    <property type="project" value="UniProtKB"/>
</dbReference>
<dbReference type="GO" id="GO:0045595">
    <property type="term" value="P:regulation of cell differentiation"/>
    <property type="evidence" value="ECO:0000270"/>
    <property type="project" value="UniProtKB"/>
</dbReference>
<dbReference type="GO" id="GO:0007346">
    <property type="term" value="P:regulation of mitotic cell cycle"/>
    <property type="evidence" value="ECO:0000314"/>
    <property type="project" value="UniProtKB"/>
</dbReference>
<dbReference type="GO" id="GO:0010830">
    <property type="term" value="P:regulation of myotube differentiation"/>
    <property type="evidence" value="ECO:0000314"/>
    <property type="project" value="UniProtKB"/>
</dbReference>
<dbReference type="GO" id="GO:0002028">
    <property type="term" value="P:regulation of sodium ion transport"/>
    <property type="evidence" value="ECO:0000250"/>
    <property type="project" value="UniProtKB"/>
</dbReference>
<dbReference type="GO" id="GO:0048511">
    <property type="term" value="P:rhythmic process"/>
    <property type="evidence" value="ECO:0007669"/>
    <property type="project" value="UniProtKB-KW"/>
</dbReference>
<dbReference type="CDD" id="cd14071">
    <property type="entry name" value="STKc_SIK"/>
    <property type="match status" value="1"/>
</dbReference>
<dbReference type="CDD" id="cd14408">
    <property type="entry name" value="UBA_SIK1"/>
    <property type="match status" value="1"/>
</dbReference>
<dbReference type="FunFam" id="3.30.200.20:FF:000003">
    <property type="entry name" value="Non-specific serine/threonine protein kinase"/>
    <property type="match status" value="1"/>
</dbReference>
<dbReference type="FunFam" id="1.10.510.10:FF:000154">
    <property type="entry name" value="Serine/threonine-protein kinase SIK2"/>
    <property type="match status" value="1"/>
</dbReference>
<dbReference type="Gene3D" id="1.10.510.10">
    <property type="entry name" value="Transferase(Phosphotransferase) domain 1"/>
    <property type="match status" value="1"/>
</dbReference>
<dbReference type="InterPro" id="IPR011009">
    <property type="entry name" value="Kinase-like_dom_sf"/>
</dbReference>
<dbReference type="InterPro" id="IPR000719">
    <property type="entry name" value="Prot_kinase_dom"/>
</dbReference>
<dbReference type="InterPro" id="IPR017441">
    <property type="entry name" value="Protein_kinase_ATP_BS"/>
</dbReference>
<dbReference type="InterPro" id="IPR008271">
    <property type="entry name" value="Ser/Thr_kinase_AS"/>
</dbReference>
<dbReference type="InterPro" id="IPR017090">
    <property type="entry name" value="Ser/Thr_kinase_SIK1/2"/>
</dbReference>
<dbReference type="InterPro" id="IPR034672">
    <property type="entry name" value="SIK"/>
</dbReference>
<dbReference type="InterPro" id="IPR015940">
    <property type="entry name" value="UBA"/>
</dbReference>
<dbReference type="PANTHER" id="PTHR24346">
    <property type="entry name" value="MAP/MICROTUBULE AFFINITY-REGULATING KINASE"/>
    <property type="match status" value="1"/>
</dbReference>
<dbReference type="PANTHER" id="PTHR24346:SF47">
    <property type="entry name" value="SERINE_THREONINE-PROTEIN KINASE SIK2-RELATED"/>
    <property type="match status" value="1"/>
</dbReference>
<dbReference type="Pfam" id="PF00069">
    <property type="entry name" value="Pkinase"/>
    <property type="match status" value="1"/>
</dbReference>
<dbReference type="Pfam" id="PF23312">
    <property type="entry name" value="UBA_SIK3"/>
    <property type="match status" value="1"/>
</dbReference>
<dbReference type="PIRSF" id="PIRSF037014">
    <property type="entry name" value="Ser/Thr_PK_SNF1-like"/>
    <property type="match status" value="1"/>
</dbReference>
<dbReference type="SMART" id="SM00220">
    <property type="entry name" value="S_TKc"/>
    <property type="match status" value="1"/>
</dbReference>
<dbReference type="SUPFAM" id="SSF56112">
    <property type="entry name" value="Protein kinase-like (PK-like)"/>
    <property type="match status" value="1"/>
</dbReference>
<dbReference type="PROSITE" id="PS00107">
    <property type="entry name" value="PROTEIN_KINASE_ATP"/>
    <property type="match status" value="1"/>
</dbReference>
<dbReference type="PROSITE" id="PS50011">
    <property type="entry name" value="PROTEIN_KINASE_DOM"/>
    <property type="match status" value="1"/>
</dbReference>
<dbReference type="PROSITE" id="PS00108">
    <property type="entry name" value="PROTEIN_KINASE_ST"/>
    <property type="match status" value="1"/>
</dbReference>
<dbReference type="PROSITE" id="PS50030">
    <property type="entry name" value="UBA"/>
    <property type="match status" value="1"/>
</dbReference>
<sequence>MVIMSEFSAVPSGTGQGQQKPLRVGFYDVERTLGKGNFAVVKLARHRVTKTQVAIKIIDKTRLDSSNLEKIYREVQLMKLLNHPNIIKLYQVMETKDMLYIVTEFAKNGEMFDYLTSNGHLSENEARQKFWQILSAVEYCHNHHIVHRDLKTENLLLDSNMDIKLADFGFGNFYKPGEPLSTWCGSPPYAAPEVFEGKEYEGPQLDVWSLGVVLYVLVCGSLPFDGPNLPTLRQRVLEGRFRIPFFMSQDCETLIRRMLVVDPAKRITIAQIRQHRWMQADPTLLQQDDPAFDMQGYTSNLGDYNEQVLGIMQALGIDRQRTIESLQNSSYNHFAAIYYLLLERLKEHRSAQPSSRPTPAPTRQPQLRSSDLSSLEVPQEILPCDPFRPSLLCPQPQALAQSVLQAEIDCDLHSSLQPLLFPLDTNCSGVFRHRSISPSSLLDTAISEEARQGPSLEEEQEVQEPLPGSTGRRHTLAEVSTHFSPLNPPCIIVSSSATASPSEGTSSDSCLPFSASEGPAGLGSGLATPGLLGTSSPVRLASPFLGSQSATPVLQTQAGLGTAVLPPVSFQEGRRASDTSLTQGLKAFRQQLRKNARTKGFLGLNKIKGLARQVCQSSVRTPRGGMSTFHTPAPSSGLQGCTTSNREGRSLLEEVLHQQRLLQLQHHSSTAAASSGCQQGPQLSPVPYVLAPCDSLLVSGIPLLPTPLLQAGMSPVASAAHLLDTHLHISAGPVALPTGPLPQCLTRLSPGCDPAGLPQGDCEMEDLTSGQRGTFVLVQ</sequence>
<gene>
    <name type="primary">Sik1</name>
    <name type="synonym">Msk</name>
    <name type="synonym">Sik</name>
    <name type="synonym">Snf1lk</name>
</gene>
<organism>
    <name type="scientific">Mus musculus</name>
    <name type="common">Mouse</name>
    <dbReference type="NCBI Taxonomy" id="10090"/>
    <lineage>
        <taxon>Eukaryota</taxon>
        <taxon>Metazoa</taxon>
        <taxon>Chordata</taxon>
        <taxon>Craniata</taxon>
        <taxon>Vertebrata</taxon>
        <taxon>Euteleostomi</taxon>
        <taxon>Mammalia</taxon>
        <taxon>Eutheria</taxon>
        <taxon>Euarchontoglires</taxon>
        <taxon>Glires</taxon>
        <taxon>Rodentia</taxon>
        <taxon>Myomorpha</taxon>
        <taxon>Muroidea</taxon>
        <taxon>Muridae</taxon>
        <taxon>Murinae</taxon>
        <taxon>Mus</taxon>
        <taxon>Mus</taxon>
    </lineage>
</organism>
<reference key="1">
    <citation type="journal article" date="1994" name="Mech. Dev.">
        <title>Identification of novel protein kinases expressed in the myocardium of the developing mouse heart.</title>
        <authorList>
            <person name="Ruiz J.C."/>
            <person name="Conlon F.L."/>
            <person name="Robertson E.J."/>
        </authorList>
    </citation>
    <scope>NUCLEOTIDE SEQUENCE [MRNA]</scope>
    <scope>TISSUE SPECIFICITY</scope>
    <source>
        <tissue>Embryo</tissue>
    </source>
</reference>
<reference key="2">
    <citation type="journal article" date="2005" name="Science">
        <title>The transcriptional landscape of the mammalian genome.</title>
        <authorList>
            <person name="Carninci P."/>
            <person name="Kasukawa T."/>
            <person name="Katayama S."/>
            <person name="Gough J."/>
            <person name="Frith M.C."/>
            <person name="Maeda N."/>
            <person name="Oyama R."/>
            <person name="Ravasi T."/>
            <person name="Lenhard B."/>
            <person name="Wells C."/>
            <person name="Kodzius R."/>
            <person name="Shimokawa K."/>
            <person name="Bajic V.B."/>
            <person name="Brenner S.E."/>
            <person name="Batalov S."/>
            <person name="Forrest A.R."/>
            <person name="Zavolan M."/>
            <person name="Davis M.J."/>
            <person name="Wilming L.G."/>
            <person name="Aidinis V."/>
            <person name="Allen J.E."/>
            <person name="Ambesi-Impiombato A."/>
            <person name="Apweiler R."/>
            <person name="Aturaliya R.N."/>
            <person name="Bailey T.L."/>
            <person name="Bansal M."/>
            <person name="Baxter L."/>
            <person name="Beisel K.W."/>
            <person name="Bersano T."/>
            <person name="Bono H."/>
            <person name="Chalk A.M."/>
            <person name="Chiu K.P."/>
            <person name="Choudhary V."/>
            <person name="Christoffels A."/>
            <person name="Clutterbuck D.R."/>
            <person name="Crowe M.L."/>
            <person name="Dalla E."/>
            <person name="Dalrymple B.P."/>
            <person name="de Bono B."/>
            <person name="Della Gatta G."/>
            <person name="di Bernardo D."/>
            <person name="Down T."/>
            <person name="Engstrom P."/>
            <person name="Fagiolini M."/>
            <person name="Faulkner G."/>
            <person name="Fletcher C.F."/>
            <person name="Fukushima T."/>
            <person name="Furuno M."/>
            <person name="Futaki S."/>
            <person name="Gariboldi M."/>
            <person name="Georgii-Hemming P."/>
            <person name="Gingeras T.R."/>
            <person name="Gojobori T."/>
            <person name="Green R.E."/>
            <person name="Gustincich S."/>
            <person name="Harbers M."/>
            <person name="Hayashi Y."/>
            <person name="Hensch T.K."/>
            <person name="Hirokawa N."/>
            <person name="Hill D."/>
            <person name="Huminiecki L."/>
            <person name="Iacono M."/>
            <person name="Ikeo K."/>
            <person name="Iwama A."/>
            <person name="Ishikawa T."/>
            <person name="Jakt M."/>
            <person name="Kanapin A."/>
            <person name="Katoh M."/>
            <person name="Kawasawa Y."/>
            <person name="Kelso J."/>
            <person name="Kitamura H."/>
            <person name="Kitano H."/>
            <person name="Kollias G."/>
            <person name="Krishnan S.P."/>
            <person name="Kruger A."/>
            <person name="Kummerfeld S.K."/>
            <person name="Kurochkin I.V."/>
            <person name="Lareau L.F."/>
            <person name="Lazarevic D."/>
            <person name="Lipovich L."/>
            <person name="Liu J."/>
            <person name="Liuni S."/>
            <person name="McWilliam S."/>
            <person name="Madan Babu M."/>
            <person name="Madera M."/>
            <person name="Marchionni L."/>
            <person name="Matsuda H."/>
            <person name="Matsuzawa S."/>
            <person name="Miki H."/>
            <person name="Mignone F."/>
            <person name="Miyake S."/>
            <person name="Morris K."/>
            <person name="Mottagui-Tabar S."/>
            <person name="Mulder N."/>
            <person name="Nakano N."/>
            <person name="Nakauchi H."/>
            <person name="Ng P."/>
            <person name="Nilsson R."/>
            <person name="Nishiguchi S."/>
            <person name="Nishikawa S."/>
            <person name="Nori F."/>
            <person name="Ohara O."/>
            <person name="Okazaki Y."/>
            <person name="Orlando V."/>
            <person name="Pang K.C."/>
            <person name="Pavan W.J."/>
            <person name="Pavesi G."/>
            <person name="Pesole G."/>
            <person name="Petrovsky N."/>
            <person name="Piazza S."/>
            <person name="Reed J."/>
            <person name="Reid J.F."/>
            <person name="Ring B.Z."/>
            <person name="Ringwald M."/>
            <person name="Rost B."/>
            <person name="Ruan Y."/>
            <person name="Salzberg S.L."/>
            <person name="Sandelin A."/>
            <person name="Schneider C."/>
            <person name="Schoenbach C."/>
            <person name="Sekiguchi K."/>
            <person name="Semple C.A."/>
            <person name="Seno S."/>
            <person name="Sessa L."/>
            <person name="Sheng Y."/>
            <person name="Shibata Y."/>
            <person name="Shimada H."/>
            <person name="Shimada K."/>
            <person name="Silva D."/>
            <person name="Sinclair B."/>
            <person name="Sperling S."/>
            <person name="Stupka E."/>
            <person name="Sugiura K."/>
            <person name="Sultana R."/>
            <person name="Takenaka Y."/>
            <person name="Taki K."/>
            <person name="Tammoja K."/>
            <person name="Tan S.L."/>
            <person name="Tang S."/>
            <person name="Taylor M.S."/>
            <person name="Tegner J."/>
            <person name="Teichmann S.A."/>
            <person name="Ueda H.R."/>
            <person name="van Nimwegen E."/>
            <person name="Verardo R."/>
            <person name="Wei C.L."/>
            <person name="Yagi K."/>
            <person name="Yamanishi H."/>
            <person name="Zabarovsky E."/>
            <person name="Zhu S."/>
            <person name="Zimmer A."/>
            <person name="Hide W."/>
            <person name="Bult C."/>
            <person name="Grimmond S.M."/>
            <person name="Teasdale R.D."/>
            <person name="Liu E.T."/>
            <person name="Brusic V."/>
            <person name="Quackenbush J."/>
            <person name="Wahlestedt C."/>
            <person name="Mattick J.S."/>
            <person name="Hume D.A."/>
            <person name="Kai C."/>
            <person name="Sasaki D."/>
            <person name="Tomaru Y."/>
            <person name="Fukuda S."/>
            <person name="Kanamori-Katayama M."/>
            <person name="Suzuki M."/>
            <person name="Aoki J."/>
            <person name="Arakawa T."/>
            <person name="Iida J."/>
            <person name="Imamura K."/>
            <person name="Itoh M."/>
            <person name="Kato T."/>
            <person name="Kawaji H."/>
            <person name="Kawagashira N."/>
            <person name="Kawashima T."/>
            <person name="Kojima M."/>
            <person name="Kondo S."/>
            <person name="Konno H."/>
            <person name="Nakano K."/>
            <person name="Ninomiya N."/>
            <person name="Nishio T."/>
            <person name="Okada M."/>
            <person name="Plessy C."/>
            <person name="Shibata K."/>
            <person name="Shiraki T."/>
            <person name="Suzuki S."/>
            <person name="Tagami M."/>
            <person name="Waki K."/>
            <person name="Watahiki A."/>
            <person name="Okamura-Oho Y."/>
            <person name="Suzuki H."/>
            <person name="Kawai J."/>
            <person name="Hayashizaki Y."/>
        </authorList>
    </citation>
    <scope>NUCLEOTIDE SEQUENCE [LARGE SCALE MRNA]</scope>
    <source>
        <strain>C57BL/6J</strain>
        <tissue>Spinal ganglion</tissue>
    </source>
</reference>
<reference key="3">
    <citation type="journal article" date="2002" name="J. Biol. Chem.">
        <title>ACTH-induced nucleocytoplasmic translocation of salt-inducible kinase. Implication in the protein kinase A-activated gene transcription in mouse adrenocortical tumor cells.</title>
        <authorList>
            <person name="Takemori H."/>
            <person name="Katoh Y."/>
            <person name="Horike N."/>
            <person name="Doi J."/>
            <person name="Okamoto M."/>
        </authorList>
    </citation>
    <scope>FUNCTION</scope>
    <scope>SUBCELLULAR LOCATION</scope>
    <scope>PHOSPHORYLATION AT SER-577</scope>
    <scope>MUTAGENESIS OF THR-268; THR-475 AND SER-577</scope>
</reference>
<reference key="4">
    <citation type="journal article" date="2004" name="Eur. J. Biochem.">
        <title>Salt-inducible kinase-1 represses cAMP response element-binding protein activity both in the nucleus and in the cytoplasm.</title>
        <authorList>
            <person name="Katoh Y."/>
            <person name="Takemori H."/>
            <person name="Min L."/>
            <person name="Muraoka M."/>
            <person name="Doi J."/>
            <person name="Horike N."/>
            <person name="Okamoto M."/>
        </authorList>
    </citation>
    <scope>FUNCTION</scope>
    <scope>SUBCELLULAR LOCATION</scope>
    <scope>DOMAIN RK-RICH REGION</scope>
    <scope>MUTAGENESIS OF 593-ARG-LYS-594; 597-ARG--LYS-599; 606-LYS--LYS-608; ILE-607 AND LEU-610</scope>
</reference>
<reference key="5">
    <citation type="journal article" date="2004" name="Genomics">
        <title>snf1lk encodes a protein kinase that may function in cell cycle regulation.</title>
        <authorList>
            <person name="Stephenson A."/>
            <person name="Huang G.Y."/>
            <person name="Nguyen N.T."/>
            <person name="Reuter S."/>
            <person name="McBride J.L."/>
            <person name="Ruiz J.C."/>
        </authorList>
    </citation>
    <scope>FUNCTION</scope>
    <scope>CATALYTIC ACTIVITY</scope>
    <scope>TISSUE SPECIFICITY</scope>
    <scope>SUBCELLULAR LOCATION</scope>
    <scope>MUTAGENESIS OF LYS-56</scope>
</reference>
<reference key="6">
    <citation type="journal article" date="2005" name="Nature">
        <title>The CREB coactivator TORC2 is a key regulator of fasting glucose metabolism.</title>
        <authorList>
            <person name="Koo S.-H."/>
            <person name="Flechner L."/>
            <person name="Qi L."/>
            <person name="Zhang X."/>
            <person name="Screaton R.A."/>
            <person name="Jeffries S."/>
            <person name="Hedrick S."/>
            <person name="Xu W."/>
            <person name="Boussouar F."/>
            <person name="Brindle P."/>
            <person name="Takemori H."/>
            <person name="Montminy M."/>
        </authorList>
    </citation>
    <scope>FUNCTION IN PHOSPHORYLATION OF CRTC2</scope>
    <scope>CATALYTIC ACTIVITY</scope>
    <scope>SUBCELLULAR LOCATION</scope>
</reference>
<reference key="7">
    <citation type="journal article" date="2006" name="FEBS J.">
        <title>Silencing the constitutive active transcription factor CREB by the LKB1-SIK signaling cascade.</title>
        <authorList>
            <person name="Katoh Y."/>
            <person name="Takemori H."/>
            <person name="Lin X.-Z."/>
            <person name="Tamura M."/>
            <person name="Muraoka M."/>
            <person name="Satoh T."/>
            <person name="Tsuchiya Y."/>
            <person name="Min L."/>
            <person name="Doi J."/>
            <person name="Miyauchi A."/>
            <person name="Witters L.A."/>
            <person name="Nakamura H."/>
            <person name="Okamoto M."/>
        </authorList>
    </citation>
    <scope>FUNCTION</scope>
    <scope>ACTIVITY REGULATION</scope>
    <scope>SUBCELLULAR LOCATION</scope>
    <scope>PHOSPHORYLATION AT THR-182 AND SER-577</scope>
    <scope>MUTAGENESIS OF LYS-56; THR-182 AND SER-577</scope>
</reference>
<reference key="8">
    <citation type="journal article" date="2007" name="Nat. Med.">
        <title>SIK1 is a class II HDAC kinase that promotes survival of skeletal myocytes.</title>
        <authorList>
            <person name="Berdeaux R."/>
            <person name="Goebel N."/>
            <person name="Banaszynski L."/>
            <person name="Takemori H."/>
            <person name="Wandless T."/>
            <person name="Shelton G.D."/>
            <person name="Montminy M."/>
        </authorList>
    </citation>
    <scope>FUNCTION IN PHOSPHORYLATION OF HDAC4 AND HDAC5</scope>
    <scope>CATALYTIC ACTIVITY</scope>
    <scope>INDUCTION</scope>
    <scope>PHOSPHORYLATION AT SER-577</scope>
    <scope>MUTAGENESIS OF LYS-56 AND SER-577</scope>
</reference>
<reference key="9">
    <citation type="journal article" date="2009" name="Sci. Signal.">
        <title>SIK1 couples LKB1 to p53-dependent anoikis and suppresses metastasis.</title>
        <authorList>
            <person name="Cheng H."/>
            <person name="Liu P."/>
            <person name="Wang Z.C."/>
            <person name="Zou L."/>
            <person name="Santiago S."/>
            <person name="Garbitt V."/>
            <person name="Gjoerup O.V."/>
            <person name="Iglehart J.D."/>
            <person name="Miron A."/>
            <person name="Richardson A.L."/>
            <person name="Hahn W.C."/>
            <person name="Zhao J.J."/>
        </authorList>
    </citation>
    <scope>FUNCTION</scope>
</reference>
<reference key="10">
    <citation type="journal article" date="2009" name="J. Biol. Chem.">
        <title>Salt-inducible kinase regulates hepatic lipogenesis by controlling SREBP-1c phosphorylation.</title>
        <authorList>
            <person name="Yoon Y.S."/>
            <person name="Seo W.Y."/>
            <person name="Lee M.W."/>
            <person name="Kim S.T."/>
            <person name="Koo S.H."/>
        </authorList>
    </citation>
    <scope>FUNCTION IN PHOSPHORYLATION OF SREBF1</scope>
    <scope>CATALYTIC ACTIVITY</scope>
</reference>
<reference key="11">
    <citation type="journal article" date="2010" name="PLoS ONE">
        <title>Lack of sik1 in mouse embryonic stem cells impairs cardiomyogenesis by down-regulating the cyclin-dependent kinase inhibitor p57kip2.</title>
        <authorList>
            <person name="Romito A."/>
            <person name="Lonardo E."/>
            <person name="Roma G."/>
            <person name="Minchiotti G."/>
            <person name="Ballabio A."/>
            <person name="Cobellis G."/>
        </authorList>
    </citation>
    <scope>FUNCTION</scope>
</reference>
<reference key="12">
    <citation type="journal article" date="2013" name="Cell">
        <title>The CRTC1-SIK1 pathway regulates entrainment of the circadian clock.</title>
        <authorList>
            <person name="Jagannath A."/>
            <person name="Butler R."/>
            <person name="Godinho S.I."/>
            <person name="Couch Y."/>
            <person name="Brown L.A."/>
            <person name="Vasudevan S.R."/>
            <person name="Flanagan K.C."/>
            <person name="Anthony D."/>
            <person name="Churchill G.C."/>
            <person name="Wood M.J."/>
            <person name="Steiner G."/>
            <person name="Ebeling M."/>
            <person name="Hossbach M."/>
            <person name="Wettstein J.G."/>
            <person name="Duffield G.E."/>
            <person name="Gatti S."/>
            <person name="Hankins M.W."/>
            <person name="Foster R.G."/>
            <person name="Peirson S.N."/>
        </authorList>
    </citation>
    <scope>FUNCTION</scope>
</reference>
<feature type="chain" id="PRO_0000086660" description="Serine/threonine-protein kinase SIK1">
    <location>
        <begin position="1"/>
        <end position="779"/>
    </location>
</feature>
<feature type="domain" description="Protein kinase" evidence="4">
    <location>
        <begin position="27"/>
        <end position="278"/>
    </location>
</feature>
<feature type="domain" description="UBA" evidence="5">
    <location>
        <begin position="303"/>
        <end position="343"/>
    </location>
</feature>
<feature type="region of interest" description="Disordered" evidence="7">
    <location>
        <begin position="350"/>
        <end position="375"/>
    </location>
</feature>
<feature type="region of interest" description="Disordered" evidence="7">
    <location>
        <begin position="449"/>
        <end position="472"/>
    </location>
</feature>
<feature type="region of interest" description="RK-rich region">
    <location>
        <begin position="586"/>
        <end position="612"/>
    </location>
</feature>
<feature type="region of interest" description="Disordered" evidence="7">
    <location>
        <begin position="621"/>
        <end position="641"/>
    </location>
</feature>
<feature type="compositionally biased region" description="Polar residues" evidence="7">
    <location>
        <begin position="363"/>
        <end position="373"/>
    </location>
</feature>
<feature type="compositionally biased region" description="Polar residues" evidence="7">
    <location>
        <begin position="628"/>
        <end position="641"/>
    </location>
</feature>
<feature type="active site" description="Proton acceptor" evidence="4 6">
    <location>
        <position position="149"/>
    </location>
</feature>
<feature type="binding site" evidence="4">
    <location>
        <begin position="33"/>
        <end position="41"/>
    </location>
    <ligand>
        <name>ATP</name>
        <dbReference type="ChEBI" id="CHEBI:30616"/>
    </ligand>
</feature>
<feature type="binding site">
    <location>
        <position position="56"/>
    </location>
    <ligand>
        <name>ATP</name>
        <dbReference type="ChEBI" id="CHEBI:30616"/>
    </ligand>
</feature>
<feature type="modified residue" description="Phosphothreonine; by LKB1 and GSK3-beta" evidence="12">
    <location>
        <position position="182"/>
    </location>
</feature>
<feature type="modified residue" description="Phosphoserine; by autocatalysis" evidence="2">
    <location>
        <position position="186"/>
    </location>
</feature>
<feature type="modified residue" description="Phosphothreonine; by CaMK1" evidence="3">
    <location>
        <position position="322"/>
    </location>
</feature>
<feature type="modified residue" description="Phosphoserine; by PKA" evidence="8 12 13">
    <location>
        <position position="577"/>
    </location>
</feature>
<feature type="mutagenesis site" description="Loss of kinase activity." evidence="9 12 13">
    <original>K</original>
    <variation>M</variation>
    <location>
        <position position="56"/>
    </location>
</feature>
<feature type="mutagenesis site" description="Loss of kinase activity." evidence="12">
    <original>T</original>
    <variation>A</variation>
    <location>
        <position position="182"/>
    </location>
</feature>
<feature type="mutagenesis site" description="Low levels of constitutive activity." evidence="12">
    <original>T</original>
    <variation>E</variation>
    <location>
        <position position="182"/>
    </location>
</feature>
<feature type="mutagenesis site" description="Does not affect phosphorylation by PKA and nuclear export following ACTH treatment." evidence="8">
    <original>T</original>
    <variation>A</variation>
    <location>
        <position position="268"/>
    </location>
</feature>
<feature type="mutagenesis site" description="Does not affect phosphorylation by PKA and nuclear export following ACTH treatment." evidence="8">
    <original>T</original>
    <variation>A</variation>
    <location>
        <position position="475"/>
    </location>
</feature>
<feature type="mutagenesis site" description="Abolishes phosphorylation by PKA and impairs nuclear export following ACTH treatment." evidence="8 12 13">
    <original>S</original>
    <variation>A</variation>
    <location>
        <position position="577"/>
    </location>
</feature>
<feature type="mutagenesis site" description="Constitutively active." evidence="8 12 13">
    <original>S</original>
    <variation>A</variation>
    <location>
        <position position="577"/>
    </location>
</feature>
<feature type="mutagenesis site" description="Localizes mainly in cytoplasm and not in nucleus." evidence="10">
    <original>RK</original>
    <variation>AA</variation>
    <location>
        <begin position="593"/>
        <end position="594"/>
    </location>
</feature>
<feature type="mutagenesis site" description="Localizes mainly in cytoplasm and not in nucleus." evidence="10">
    <original>RTK</original>
    <variation>ATA</variation>
    <location>
        <begin position="597"/>
        <end position="599"/>
    </location>
</feature>
<feature type="mutagenesis site" description="Localizes mainly in cytoplasm and not in nucleus." evidence="10">
    <original>KIK</original>
    <variation>AIA</variation>
    <location>
        <begin position="606"/>
        <end position="608"/>
    </location>
</feature>
<feature type="mutagenesis site" description="Localizes mainly in cytoplasm and not in nucleus; when associated with D-483 and A-610." evidence="10">
    <original>I</original>
    <variation>A</variation>
    <location>
        <position position="607"/>
    </location>
</feature>
<feature type="mutagenesis site" description="Localizes mainly in cytoplasm and not in nucleus; when associated with D-483 and A-607." evidence="10">
    <original>L</original>
    <variation>A</variation>
    <location>
        <position position="610"/>
    </location>
</feature>
<feature type="sequence conflict" description="In Ref. 1; AAA67926." evidence="19" ref="1">
    <original>WC</original>
    <variation>CV</variation>
    <location>
        <begin position="183"/>
        <end position="184"/>
    </location>
</feature>
<keyword id="KW-0067">ATP-binding</keyword>
<keyword id="KW-0090">Biological rhythms</keyword>
<keyword id="KW-0131">Cell cycle</keyword>
<keyword id="KW-0963">Cytoplasm</keyword>
<keyword id="KW-0217">Developmental protein</keyword>
<keyword id="KW-0221">Differentiation</keyword>
<keyword id="KW-0418">Kinase</keyword>
<keyword id="KW-0460">Magnesium</keyword>
<keyword id="KW-0479">Metal-binding</keyword>
<keyword id="KW-0547">Nucleotide-binding</keyword>
<keyword id="KW-0539">Nucleus</keyword>
<keyword id="KW-0597">Phosphoprotein</keyword>
<keyword id="KW-1185">Reference proteome</keyword>
<keyword id="KW-0723">Serine/threonine-protein kinase</keyword>
<keyword id="KW-0808">Transferase</keyword>
<keyword id="KW-0043">Tumor suppressor</keyword>